<organism>
    <name type="scientific">Yersinia pestis bv. Antiqua (strain Angola)</name>
    <dbReference type="NCBI Taxonomy" id="349746"/>
    <lineage>
        <taxon>Bacteria</taxon>
        <taxon>Pseudomonadati</taxon>
        <taxon>Pseudomonadota</taxon>
        <taxon>Gammaproteobacteria</taxon>
        <taxon>Enterobacterales</taxon>
        <taxon>Yersiniaceae</taxon>
        <taxon>Yersinia</taxon>
    </lineage>
</organism>
<reference key="1">
    <citation type="journal article" date="2010" name="J. Bacteriol.">
        <title>Genome sequence of the deep-rooted Yersinia pestis strain Angola reveals new insights into the evolution and pangenome of the plague bacterium.</title>
        <authorList>
            <person name="Eppinger M."/>
            <person name="Worsham P.L."/>
            <person name="Nikolich M.P."/>
            <person name="Riley D.R."/>
            <person name="Sebastian Y."/>
            <person name="Mou S."/>
            <person name="Achtman M."/>
            <person name="Lindler L.E."/>
            <person name="Ravel J."/>
        </authorList>
    </citation>
    <scope>NUCLEOTIDE SEQUENCE [LARGE SCALE GENOMIC DNA]</scope>
    <source>
        <strain>Angola</strain>
    </source>
</reference>
<sequence length="260" mass="29678">MELQLTGKESGWWIVSHENKLWLPKGELPQGNAANWSLQGTTARQIGEWQGQSVWLIRQMMPSGMGSVRQLLDVDRGLFQLAGRGVQLAEFYRSHRFCGYCGHEMHASRTEWASLCNHCRERYYPQIAPCVIVAIRRGDEILLAQHVRHRGGINTVLAGFVEVGETLEQAVSREVLEESNIHIKNLRYVTSQPWPFPHSLMMAFMADYDSGELCHDPKELLNAGWYRYDQLPLLPPPGTVARRLIEDTVVLCREHSDLSQ</sequence>
<evidence type="ECO:0000255" key="1">
    <source>
        <dbReference type="HAMAP-Rule" id="MF_00297"/>
    </source>
</evidence>
<proteinExistence type="inferred from homology"/>
<name>NUDC_YERPG</name>
<feature type="chain" id="PRO_1000115256" description="NAD-capped RNA hydrolase NudC">
    <location>
        <begin position="1"/>
        <end position="260"/>
    </location>
</feature>
<feature type="domain" description="Nudix hydrolase" evidence="1">
    <location>
        <begin position="125"/>
        <end position="248"/>
    </location>
</feature>
<feature type="short sequence motif" description="Nudix box" evidence="1">
    <location>
        <begin position="159"/>
        <end position="180"/>
    </location>
</feature>
<feature type="binding site" evidence="1">
    <location>
        <position position="25"/>
    </location>
    <ligand>
        <name>substrate</name>
    </ligand>
</feature>
<feature type="binding site" evidence="1">
    <location>
        <position position="69"/>
    </location>
    <ligand>
        <name>substrate</name>
    </ligand>
</feature>
<feature type="binding site" evidence="1">
    <location>
        <position position="98"/>
    </location>
    <ligand>
        <name>Zn(2+)</name>
        <dbReference type="ChEBI" id="CHEBI:29105"/>
    </ligand>
</feature>
<feature type="binding site" evidence="1">
    <location>
        <position position="101"/>
    </location>
    <ligand>
        <name>Zn(2+)</name>
        <dbReference type="ChEBI" id="CHEBI:29105"/>
    </ligand>
</feature>
<feature type="binding site" evidence="1">
    <location>
        <position position="111"/>
    </location>
    <ligand>
        <name>substrate</name>
    </ligand>
</feature>
<feature type="binding site" evidence="1">
    <location>
        <position position="116"/>
    </location>
    <ligand>
        <name>Zn(2+)</name>
        <dbReference type="ChEBI" id="CHEBI:29105"/>
    </ligand>
</feature>
<feature type="binding site" evidence="1">
    <location>
        <position position="119"/>
    </location>
    <ligand>
        <name>Zn(2+)</name>
        <dbReference type="ChEBI" id="CHEBI:29105"/>
    </ligand>
</feature>
<feature type="binding site" evidence="1">
    <location>
        <position position="124"/>
    </location>
    <ligand>
        <name>substrate</name>
    </ligand>
</feature>
<feature type="binding site" evidence="1">
    <location>
        <position position="158"/>
    </location>
    <ligand>
        <name>a divalent metal cation</name>
        <dbReference type="ChEBI" id="CHEBI:60240"/>
        <label>1</label>
    </ligand>
</feature>
<feature type="binding site" evidence="1">
    <location>
        <position position="174"/>
    </location>
    <ligand>
        <name>a divalent metal cation</name>
        <dbReference type="ChEBI" id="CHEBI:60240"/>
        <label>2</label>
    </ligand>
</feature>
<feature type="binding site" evidence="1">
    <location>
        <position position="174"/>
    </location>
    <ligand>
        <name>a divalent metal cation</name>
        <dbReference type="ChEBI" id="CHEBI:60240"/>
        <label>3</label>
    </ligand>
</feature>
<feature type="binding site" evidence="1">
    <location>
        <position position="178"/>
    </location>
    <ligand>
        <name>a divalent metal cation</name>
        <dbReference type="ChEBI" id="CHEBI:60240"/>
        <label>1</label>
    </ligand>
</feature>
<feature type="binding site" evidence="1">
    <location>
        <position position="178"/>
    </location>
    <ligand>
        <name>a divalent metal cation</name>
        <dbReference type="ChEBI" id="CHEBI:60240"/>
        <label>3</label>
    </ligand>
</feature>
<feature type="binding site" evidence="1">
    <location>
        <begin position="192"/>
        <end position="199"/>
    </location>
    <ligand>
        <name>substrate</name>
    </ligand>
</feature>
<feature type="binding site" evidence="1">
    <location>
        <position position="219"/>
    </location>
    <ligand>
        <name>a divalent metal cation</name>
        <dbReference type="ChEBI" id="CHEBI:60240"/>
        <label>1</label>
    </ligand>
</feature>
<feature type="binding site" evidence="1">
    <location>
        <position position="219"/>
    </location>
    <ligand>
        <name>a divalent metal cation</name>
        <dbReference type="ChEBI" id="CHEBI:60240"/>
        <label>3</label>
    </ligand>
</feature>
<feature type="binding site" evidence="1">
    <location>
        <position position="241"/>
    </location>
    <ligand>
        <name>substrate</name>
    </ligand>
</feature>
<accession>A9R8D3</accession>
<protein>
    <recommendedName>
        <fullName evidence="1">NAD-capped RNA hydrolase NudC</fullName>
        <shortName evidence="1">DeNADding enzyme NudC</shortName>
        <ecNumber evidence="1">3.6.1.-</ecNumber>
    </recommendedName>
    <alternativeName>
        <fullName evidence="1">NADH pyrophosphatase</fullName>
        <ecNumber evidence="1">3.6.1.22</ecNumber>
    </alternativeName>
</protein>
<gene>
    <name evidence="1" type="primary">nudC</name>
    <name type="ordered locus">YpAngola_A0457</name>
</gene>
<dbReference type="EC" id="3.6.1.-" evidence="1"/>
<dbReference type="EC" id="3.6.1.22" evidence="1"/>
<dbReference type="EMBL" id="CP000901">
    <property type="protein sequence ID" value="ABX86856.1"/>
    <property type="molecule type" value="Genomic_DNA"/>
</dbReference>
<dbReference type="RefSeq" id="WP_002210684.1">
    <property type="nucleotide sequence ID" value="NZ_CP009935.1"/>
</dbReference>
<dbReference type="SMR" id="A9R8D3"/>
<dbReference type="GeneID" id="57974981"/>
<dbReference type="KEGG" id="ypg:YpAngola_A0457"/>
<dbReference type="PATRIC" id="fig|349746.12.peg.1413"/>
<dbReference type="GO" id="GO:0005829">
    <property type="term" value="C:cytosol"/>
    <property type="evidence" value="ECO:0007669"/>
    <property type="project" value="TreeGrafter"/>
</dbReference>
<dbReference type="GO" id="GO:0000287">
    <property type="term" value="F:magnesium ion binding"/>
    <property type="evidence" value="ECO:0007669"/>
    <property type="project" value="UniProtKB-UniRule"/>
</dbReference>
<dbReference type="GO" id="GO:0030145">
    <property type="term" value="F:manganese ion binding"/>
    <property type="evidence" value="ECO:0007669"/>
    <property type="project" value="UniProtKB-UniRule"/>
</dbReference>
<dbReference type="GO" id="GO:0000210">
    <property type="term" value="F:NAD+ diphosphatase activity"/>
    <property type="evidence" value="ECO:0007669"/>
    <property type="project" value="UniProtKB-UniRule"/>
</dbReference>
<dbReference type="GO" id="GO:0035529">
    <property type="term" value="F:NADH pyrophosphatase activity"/>
    <property type="evidence" value="ECO:0007669"/>
    <property type="project" value="TreeGrafter"/>
</dbReference>
<dbReference type="GO" id="GO:0110153">
    <property type="term" value="F:RNA NAD-cap (NMN-forming) hydrolase activity"/>
    <property type="evidence" value="ECO:0007669"/>
    <property type="project" value="RHEA"/>
</dbReference>
<dbReference type="GO" id="GO:0008270">
    <property type="term" value="F:zinc ion binding"/>
    <property type="evidence" value="ECO:0007669"/>
    <property type="project" value="UniProtKB-UniRule"/>
</dbReference>
<dbReference type="GO" id="GO:0019677">
    <property type="term" value="P:NAD catabolic process"/>
    <property type="evidence" value="ECO:0007669"/>
    <property type="project" value="TreeGrafter"/>
</dbReference>
<dbReference type="GO" id="GO:0006734">
    <property type="term" value="P:NADH metabolic process"/>
    <property type="evidence" value="ECO:0007669"/>
    <property type="project" value="TreeGrafter"/>
</dbReference>
<dbReference type="GO" id="GO:0006742">
    <property type="term" value="P:NADP catabolic process"/>
    <property type="evidence" value="ECO:0007669"/>
    <property type="project" value="TreeGrafter"/>
</dbReference>
<dbReference type="CDD" id="cd03429">
    <property type="entry name" value="NUDIX_NADH_pyrophosphatase_Nudt13"/>
    <property type="match status" value="1"/>
</dbReference>
<dbReference type="FunFam" id="3.90.79.10:FF:000004">
    <property type="entry name" value="NADH pyrophosphatase"/>
    <property type="match status" value="1"/>
</dbReference>
<dbReference type="FunFam" id="3.90.79.20:FF:000001">
    <property type="entry name" value="NADH pyrophosphatase"/>
    <property type="match status" value="1"/>
</dbReference>
<dbReference type="Gene3D" id="3.90.79.20">
    <property type="match status" value="1"/>
</dbReference>
<dbReference type="Gene3D" id="3.90.79.10">
    <property type="entry name" value="Nucleoside Triphosphate Pyrophosphohydrolase"/>
    <property type="match status" value="1"/>
</dbReference>
<dbReference type="HAMAP" id="MF_00297">
    <property type="entry name" value="Nudix_NudC"/>
    <property type="match status" value="1"/>
</dbReference>
<dbReference type="InterPro" id="IPR050241">
    <property type="entry name" value="NAD-cap_RNA_hydrolase_NudC"/>
</dbReference>
<dbReference type="InterPro" id="IPR049734">
    <property type="entry name" value="NudC-like_C"/>
</dbReference>
<dbReference type="InterPro" id="IPR015797">
    <property type="entry name" value="NUDIX_hydrolase-like_dom_sf"/>
</dbReference>
<dbReference type="InterPro" id="IPR020084">
    <property type="entry name" value="NUDIX_hydrolase_CS"/>
</dbReference>
<dbReference type="InterPro" id="IPR000086">
    <property type="entry name" value="NUDIX_hydrolase_dom"/>
</dbReference>
<dbReference type="InterPro" id="IPR022925">
    <property type="entry name" value="RNA_Hydrolase_NudC"/>
</dbReference>
<dbReference type="InterPro" id="IPR015376">
    <property type="entry name" value="Znr_NADH_PPase"/>
</dbReference>
<dbReference type="NCBIfam" id="NF001299">
    <property type="entry name" value="PRK00241.1"/>
    <property type="match status" value="1"/>
</dbReference>
<dbReference type="PANTHER" id="PTHR42904:SF6">
    <property type="entry name" value="NAD-CAPPED RNA HYDROLASE NUDT12"/>
    <property type="match status" value="1"/>
</dbReference>
<dbReference type="PANTHER" id="PTHR42904">
    <property type="entry name" value="NUDIX HYDROLASE, NUDC SUBFAMILY"/>
    <property type="match status" value="1"/>
</dbReference>
<dbReference type="Pfam" id="PF00293">
    <property type="entry name" value="NUDIX"/>
    <property type="match status" value="1"/>
</dbReference>
<dbReference type="Pfam" id="PF09297">
    <property type="entry name" value="Zn_ribbon_NUD"/>
    <property type="match status" value="1"/>
</dbReference>
<dbReference type="SUPFAM" id="SSF55811">
    <property type="entry name" value="Nudix"/>
    <property type="match status" value="2"/>
</dbReference>
<dbReference type="PROSITE" id="PS51462">
    <property type="entry name" value="NUDIX"/>
    <property type="match status" value="1"/>
</dbReference>
<dbReference type="PROSITE" id="PS00893">
    <property type="entry name" value="NUDIX_BOX"/>
    <property type="match status" value="1"/>
</dbReference>
<comment type="function">
    <text evidence="1">mRNA decapping enzyme that specifically removes the nicotinamide adenine dinucleotide (NAD) cap from a subset of mRNAs by hydrolyzing the diphosphate linkage to produce nicotinamide mononucleotide (NMN) and 5' monophosphate mRNA. The NAD-cap is present at the 5'-end of some mRNAs and stabilizes RNA against 5'-processing. Has preference for mRNAs with a 5'-end purine. Catalyzes the hydrolysis of a broad range of dinucleotide pyrophosphates.</text>
</comment>
<comment type="catalytic activity">
    <reaction evidence="1">
        <text>a 5'-end NAD(+)-phospho-ribonucleoside in mRNA + H2O = a 5'-end phospho-adenosine-phospho-ribonucleoside in mRNA + beta-nicotinamide D-ribonucleotide + 2 H(+)</text>
        <dbReference type="Rhea" id="RHEA:60876"/>
        <dbReference type="Rhea" id="RHEA-COMP:15698"/>
        <dbReference type="Rhea" id="RHEA-COMP:15719"/>
        <dbReference type="ChEBI" id="CHEBI:14649"/>
        <dbReference type="ChEBI" id="CHEBI:15377"/>
        <dbReference type="ChEBI" id="CHEBI:15378"/>
        <dbReference type="ChEBI" id="CHEBI:144029"/>
        <dbReference type="ChEBI" id="CHEBI:144051"/>
    </reaction>
    <physiologicalReaction direction="left-to-right" evidence="1">
        <dbReference type="Rhea" id="RHEA:60877"/>
    </physiologicalReaction>
</comment>
<comment type="catalytic activity">
    <reaction evidence="1">
        <text>NAD(+) + H2O = beta-nicotinamide D-ribonucleotide + AMP + 2 H(+)</text>
        <dbReference type="Rhea" id="RHEA:11800"/>
        <dbReference type="ChEBI" id="CHEBI:14649"/>
        <dbReference type="ChEBI" id="CHEBI:15377"/>
        <dbReference type="ChEBI" id="CHEBI:15378"/>
        <dbReference type="ChEBI" id="CHEBI:57540"/>
        <dbReference type="ChEBI" id="CHEBI:456215"/>
        <dbReference type="EC" id="3.6.1.22"/>
    </reaction>
</comment>
<comment type="catalytic activity">
    <reaction evidence="1">
        <text>NADH + H2O = reduced beta-nicotinamide D-ribonucleotide + AMP + 2 H(+)</text>
        <dbReference type="Rhea" id="RHEA:48868"/>
        <dbReference type="ChEBI" id="CHEBI:15377"/>
        <dbReference type="ChEBI" id="CHEBI:15378"/>
        <dbReference type="ChEBI" id="CHEBI:57945"/>
        <dbReference type="ChEBI" id="CHEBI:90832"/>
        <dbReference type="ChEBI" id="CHEBI:456215"/>
        <dbReference type="EC" id="3.6.1.22"/>
    </reaction>
</comment>
<comment type="cofactor">
    <cofactor evidence="1">
        <name>Mg(2+)</name>
        <dbReference type="ChEBI" id="CHEBI:18420"/>
    </cofactor>
    <cofactor evidence="1">
        <name>Mn(2+)</name>
        <dbReference type="ChEBI" id="CHEBI:29035"/>
    </cofactor>
    <text evidence="1">Divalent metal cations. Mg(2+) or Mn(2+).</text>
</comment>
<comment type="cofactor">
    <cofactor evidence="1">
        <name>Zn(2+)</name>
        <dbReference type="ChEBI" id="CHEBI:29105"/>
    </cofactor>
    <text evidence="1">Binds 1 zinc ion per subunit.</text>
</comment>
<comment type="subunit">
    <text evidence="1">Homodimer.</text>
</comment>
<comment type="similarity">
    <text evidence="1">Belongs to the Nudix hydrolase family. NudC subfamily.</text>
</comment>
<keyword id="KW-0378">Hydrolase</keyword>
<keyword id="KW-0460">Magnesium</keyword>
<keyword id="KW-0464">Manganese</keyword>
<keyword id="KW-0479">Metal-binding</keyword>
<keyword id="KW-0520">NAD</keyword>
<keyword id="KW-0862">Zinc</keyword>